<organism>
    <name type="scientific">Synechococcus sp. (strain JA-2-3B'a(2-13))</name>
    <name type="common">Cyanobacteria bacterium Yellowstone B-Prime</name>
    <dbReference type="NCBI Taxonomy" id="321332"/>
    <lineage>
        <taxon>Bacteria</taxon>
        <taxon>Bacillati</taxon>
        <taxon>Cyanobacteriota</taxon>
        <taxon>Cyanophyceae</taxon>
        <taxon>Synechococcales</taxon>
        <taxon>Synechococcaceae</taxon>
        <taxon>Synechococcus</taxon>
    </lineage>
</organism>
<dbReference type="EMBL" id="CP000240">
    <property type="protein sequence ID" value="ABD01430.1"/>
    <property type="molecule type" value="Genomic_DNA"/>
</dbReference>
<dbReference type="RefSeq" id="WP_011432091.1">
    <property type="nucleotide sequence ID" value="NC_007776.1"/>
</dbReference>
<dbReference type="SMR" id="Q2JP65"/>
<dbReference type="STRING" id="321332.CYB_0435"/>
<dbReference type="KEGG" id="cyb:CYB_0435"/>
<dbReference type="eggNOG" id="COG0231">
    <property type="taxonomic scope" value="Bacteria"/>
</dbReference>
<dbReference type="HOGENOM" id="CLU_074944_0_1_3"/>
<dbReference type="OrthoDB" id="9801844at2"/>
<dbReference type="UniPathway" id="UPA00345"/>
<dbReference type="Proteomes" id="UP000001938">
    <property type="component" value="Chromosome"/>
</dbReference>
<dbReference type="GO" id="GO:0005737">
    <property type="term" value="C:cytoplasm"/>
    <property type="evidence" value="ECO:0007669"/>
    <property type="project" value="UniProtKB-SubCell"/>
</dbReference>
<dbReference type="GO" id="GO:0003746">
    <property type="term" value="F:translation elongation factor activity"/>
    <property type="evidence" value="ECO:0007669"/>
    <property type="project" value="UniProtKB-UniRule"/>
</dbReference>
<dbReference type="GO" id="GO:0043043">
    <property type="term" value="P:peptide biosynthetic process"/>
    <property type="evidence" value="ECO:0007669"/>
    <property type="project" value="InterPro"/>
</dbReference>
<dbReference type="CDD" id="cd04470">
    <property type="entry name" value="S1_EF-P_repeat_1"/>
    <property type="match status" value="1"/>
</dbReference>
<dbReference type="CDD" id="cd05794">
    <property type="entry name" value="S1_EF-P_repeat_2"/>
    <property type="match status" value="1"/>
</dbReference>
<dbReference type="FunFam" id="2.30.30.30:FF:000003">
    <property type="entry name" value="Elongation factor P"/>
    <property type="match status" value="1"/>
</dbReference>
<dbReference type="FunFam" id="2.40.50.140:FF:000004">
    <property type="entry name" value="Elongation factor P"/>
    <property type="match status" value="1"/>
</dbReference>
<dbReference type="FunFam" id="2.40.50.140:FF:000009">
    <property type="entry name" value="Elongation factor P"/>
    <property type="match status" value="1"/>
</dbReference>
<dbReference type="Gene3D" id="2.30.30.30">
    <property type="match status" value="1"/>
</dbReference>
<dbReference type="Gene3D" id="2.40.50.140">
    <property type="entry name" value="Nucleic acid-binding proteins"/>
    <property type="match status" value="2"/>
</dbReference>
<dbReference type="HAMAP" id="MF_00141">
    <property type="entry name" value="EF_P"/>
    <property type="match status" value="1"/>
</dbReference>
<dbReference type="InterPro" id="IPR015365">
    <property type="entry name" value="Elong-fact-P_C"/>
</dbReference>
<dbReference type="InterPro" id="IPR012340">
    <property type="entry name" value="NA-bd_OB-fold"/>
</dbReference>
<dbReference type="InterPro" id="IPR014722">
    <property type="entry name" value="Rib_uL2_dom2"/>
</dbReference>
<dbReference type="InterPro" id="IPR020599">
    <property type="entry name" value="Transl_elong_fac_P/YeiP"/>
</dbReference>
<dbReference type="InterPro" id="IPR013185">
    <property type="entry name" value="Transl_elong_KOW-like"/>
</dbReference>
<dbReference type="InterPro" id="IPR001059">
    <property type="entry name" value="Transl_elong_P/YeiP_cen"/>
</dbReference>
<dbReference type="InterPro" id="IPR013852">
    <property type="entry name" value="Transl_elong_P/YeiP_CS"/>
</dbReference>
<dbReference type="InterPro" id="IPR011768">
    <property type="entry name" value="Transl_elongation_fac_P"/>
</dbReference>
<dbReference type="InterPro" id="IPR008991">
    <property type="entry name" value="Translation_prot_SH3-like_sf"/>
</dbReference>
<dbReference type="NCBIfam" id="TIGR00038">
    <property type="entry name" value="efp"/>
    <property type="match status" value="1"/>
</dbReference>
<dbReference type="NCBIfam" id="NF001810">
    <property type="entry name" value="PRK00529.1"/>
    <property type="match status" value="1"/>
</dbReference>
<dbReference type="PANTHER" id="PTHR30053">
    <property type="entry name" value="ELONGATION FACTOR P"/>
    <property type="match status" value="1"/>
</dbReference>
<dbReference type="PANTHER" id="PTHR30053:SF12">
    <property type="entry name" value="ELONGATION FACTOR P (EF-P) FAMILY PROTEIN"/>
    <property type="match status" value="1"/>
</dbReference>
<dbReference type="Pfam" id="PF01132">
    <property type="entry name" value="EFP"/>
    <property type="match status" value="1"/>
</dbReference>
<dbReference type="Pfam" id="PF08207">
    <property type="entry name" value="EFP_N"/>
    <property type="match status" value="1"/>
</dbReference>
<dbReference type="Pfam" id="PF09285">
    <property type="entry name" value="Elong-fact-P_C"/>
    <property type="match status" value="1"/>
</dbReference>
<dbReference type="PIRSF" id="PIRSF005901">
    <property type="entry name" value="EF-P"/>
    <property type="match status" value="1"/>
</dbReference>
<dbReference type="SMART" id="SM01185">
    <property type="entry name" value="EFP"/>
    <property type="match status" value="1"/>
</dbReference>
<dbReference type="SMART" id="SM00841">
    <property type="entry name" value="Elong-fact-P_C"/>
    <property type="match status" value="1"/>
</dbReference>
<dbReference type="SUPFAM" id="SSF50249">
    <property type="entry name" value="Nucleic acid-binding proteins"/>
    <property type="match status" value="2"/>
</dbReference>
<dbReference type="SUPFAM" id="SSF50104">
    <property type="entry name" value="Translation proteins SH3-like domain"/>
    <property type="match status" value="1"/>
</dbReference>
<dbReference type="PROSITE" id="PS01275">
    <property type="entry name" value="EFP"/>
    <property type="match status" value="1"/>
</dbReference>
<comment type="function">
    <text evidence="1">Involved in peptide bond synthesis. Stimulates efficient translation and peptide-bond synthesis on native or reconstituted 70S ribosomes in vitro. Probably functions indirectly by altering the affinity of the ribosome for aminoacyl-tRNA, thus increasing their reactivity as acceptors for peptidyl transferase.</text>
</comment>
<comment type="pathway">
    <text evidence="1">Protein biosynthesis; polypeptide chain elongation.</text>
</comment>
<comment type="subcellular location">
    <subcellularLocation>
        <location evidence="1">Cytoplasm</location>
    </subcellularLocation>
</comment>
<comment type="similarity">
    <text evidence="1">Belongs to the elongation factor P family.</text>
</comment>
<protein>
    <recommendedName>
        <fullName evidence="1">Elongation factor P</fullName>
        <shortName evidence="1">EF-P</shortName>
    </recommendedName>
</protein>
<name>EFP_SYNJB</name>
<accession>Q2JP65</accession>
<gene>
    <name evidence="1" type="primary">efp</name>
    <name type="ordered locus">CYB_0435</name>
</gene>
<keyword id="KW-0963">Cytoplasm</keyword>
<keyword id="KW-0251">Elongation factor</keyword>
<keyword id="KW-0648">Protein biosynthesis</keyword>
<keyword id="KW-1185">Reference proteome</keyword>
<reference key="1">
    <citation type="journal article" date="2007" name="ISME J.">
        <title>Population level functional diversity in a microbial community revealed by comparative genomic and metagenomic analyses.</title>
        <authorList>
            <person name="Bhaya D."/>
            <person name="Grossman A.R."/>
            <person name="Steunou A.-S."/>
            <person name="Khuri N."/>
            <person name="Cohan F.M."/>
            <person name="Hamamura N."/>
            <person name="Melendrez M.C."/>
            <person name="Bateson M.M."/>
            <person name="Ward D.M."/>
            <person name="Heidelberg J.F."/>
        </authorList>
    </citation>
    <scope>NUCLEOTIDE SEQUENCE [LARGE SCALE GENOMIC DNA]</scope>
    <source>
        <strain>JA-2-3B'a(2-13)</strain>
    </source>
</reference>
<feature type="chain" id="PRO_1000010883" description="Elongation factor P">
    <location>
        <begin position="1"/>
        <end position="185"/>
    </location>
</feature>
<evidence type="ECO:0000255" key="1">
    <source>
        <dbReference type="HAMAP-Rule" id="MF_00141"/>
    </source>
</evidence>
<sequence length="185" mass="20317">MISSNDLRPGVSVEIDGAPYKVIEFLHVKPGKGAAFVRTKLKNMQTGNVVEKTFRAGETLPAATIEKVEMQYLYAEGNNLVFMDMETYEQAPITAAQIGSAVKYLKENMQVSILRWNGQVIDVELPNTVVLEVVETDPGVKGDTATGGTKPAKLETGAEIQVPLFIKVGERIRVDTRTDTYLGRE</sequence>
<proteinExistence type="inferred from homology"/>